<proteinExistence type="inferred from homology"/>
<name>GPDA_MESFL</name>
<comment type="function">
    <text evidence="1">Catalyzes the reduction of the glycolytic intermediate dihydroxyacetone phosphate (DHAP) to sn-glycerol 3-phosphate (G3P), the key precursor for phospholipid synthesis.</text>
</comment>
<comment type="catalytic activity">
    <reaction evidence="1">
        <text>sn-glycerol 3-phosphate + NAD(+) = dihydroxyacetone phosphate + NADH + H(+)</text>
        <dbReference type="Rhea" id="RHEA:11092"/>
        <dbReference type="ChEBI" id="CHEBI:15378"/>
        <dbReference type="ChEBI" id="CHEBI:57540"/>
        <dbReference type="ChEBI" id="CHEBI:57597"/>
        <dbReference type="ChEBI" id="CHEBI:57642"/>
        <dbReference type="ChEBI" id="CHEBI:57945"/>
        <dbReference type="EC" id="1.1.1.94"/>
    </reaction>
    <physiologicalReaction direction="right-to-left" evidence="1">
        <dbReference type="Rhea" id="RHEA:11094"/>
    </physiologicalReaction>
</comment>
<comment type="catalytic activity">
    <reaction evidence="1">
        <text>sn-glycerol 3-phosphate + NADP(+) = dihydroxyacetone phosphate + NADPH + H(+)</text>
        <dbReference type="Rhea" id="RHEA:11096"/>
        <dbReference type="ChEBI" id="CHEBI:15378"/>
        <dbReference type="ChEBI" id="CHEBI:57597"/>
        <dbReference type="ChEBI" id="CHEBI:57642"/>
        <dbReference type="ChEBI" id="CHEBI:57783"/>
        <dbReference type="ChEBI" id="CHEBI:58349"/>
        <dbReference type="EC" id="1.1.1.94"/>
    </reaction>
    <physiologicalReaction direction="right-to-left" evidence="1">
        <dbReference type="Rhea" id="RHEA:11098"/>
    </physiologicalReaction>
</comment>
<comment type="pathway">
    <text evidence="1">Membrane lipid metabolism; glycerophospholipid metabolism.</text>
</comment>
<comment type="subcellular location">
    <subcellularLocation>
        <location evidence="1">Cytoplasm</location>
    </subcellularLocation>
</comment>
<comment type="similarity">
    <text evidence="1">Belongs to the NAD-dependent glycerol-3-phosphate dehydrogenase family.</text>
</comment>
<accession>Q6F1R6</accession>
<protein>
    <recommendedName>
        <fullName evidence="1">Glycerol-3-phosphate dehydrogenase [NAD(P)+]</fullName>
        <ecNumber evidence="1">1.1.1.94</ecNumber>
    </recommendedName>
    <alternativeName>
        <fullName evidence="1">NAD(P)(+)-dependent glycerol-3-phosphate dehydrogenase</fullName>
    </alternativeName>
    <alternativeName>
        <fullName evidence="1">NAD(P)H-dependent dihydroxyacetone-phosphate reductase</fullName>
    </alternativeName>
</protein>
<feature type="chain" id="PRO_0000137987" description="Glycerol-3-phosphate dehydrogenase [NAD(P)+]">
    <location>
        <begin position="1"/>
        <end position="334"/>
    </location>
</feature>
<feature type="active site" description="Proton acceptor" evidence="1">
    <location>
        <position position="195"/>
    </location>
</feature>
<feature type="binding site" evidence="1">
    <location>
        <position position="14"/>
    </location>
    <ligand>
        <name>NADPH</name>
        <dbReference type="ChEBI" id="CHEBI:57783"/>
    </ligand>
</feature>
<feature type="binding site" evidence="1">
    <location>
        <position position="108"/>
    </location>
    <ligand>
        <name>NADPH</name>
        <dbReference type="ChEBI" id="CHEBI:57783"/>
    </ligand>
</feature>
<feature type="binding site" evidence="1">
    <location>
        <position position="108"/>
    </location>
    <ligand>
        <name>sn-glycerol 3-phosphate</name>
        <dbReference type="ChEBI" id="CHEBI:57597"/>
    </ligand>
</feature>
<feature type="binding site" evidence="1">
    <location>
        <position position="140"/>
    </location>
    <ligand>
        <name>sn-glycerol 3-phosphate</name>
        <dbReference type="ChEBI" id="CHEBI:57597"/>
    </ligand>
</feature>
<feature type="binding site" evidence="1">
    <location>
        <position position="142"/>
    </location>
    <ligand>
        <name>sn-glycerol 3-phosphate</name>
        <dbReference type="ChEBI" id="CHEBI:57597"/>
    </ligand>
</feature>
<feature type="binding site" evidence="1">
    <location>
        <position position="144"/>
    </location>
    <ligand>
        <name>NADPH</name>
        <dbReference type="ChEBI" id="CHEBI:57783"/>
    </ligand>
</feature>
<feature type="binding site" evidence="1">
    <location>
        <position position="195"/>
    </location>
    <ligand>
        <name>sn-glycerol 3-phosphate</name>
        <dbReference type="ChEBI" id="CHEBI:57597"/>
    </ligand>
</feature>
<feature type="binding site" evidence="1">
    <location>
        <position position="248"/>
    </location>
    <ligand>
        <name>sn-glycerol 3-phosphate</name>
        <dbReference type="ChEBI" id="CHEBI:57597"/>
    </ligand>
</feature>
<feature type="binding site" evidence="1">
    <location>
        <position position="258"/>
    </location>
    <ligand>
        <name>sn-glycerol 3-phosphate</name>
        <dbReference type="ChEBI" id="CHEBI:57597"/>
    </ligand>
</feature>
<feature type="binding site" evidence="1">
    <location>
        <position position="259"/>
    </location>
    <ligand>
        <name>NADPH</name>
        <dbReference type="ChEBI" id="CHEBI:57783"/>
    </ligand>
</feature>
<feature type="binding site" evidence="1">
    <location>
        <position position="259"/>
    </location>
    <ligand>
        <name>sn-glycerol 3-phosphate</name>
        <dbReference type="ChEBI" id="CHEBI:57597"/>
    </ligand>
</feature>
<feature type="binding site" evidence="1">
    <location>
        <position position="260"/>
    </location>
    <ligand>
        <name>sn-glycerol 3-phosphate</name>
        <dbReference type="ChEBI" id="CHEBI:57597"/>
    </ligand>
</feature>
<feature type="binding site" evidence="1">
    <location>
        <position position="285"/>
    </location>
    <ligand>
        <name>NADPH</name>
        <dbReference type="ChEBI" id="CHEBI:57783"/>
    </ligand>
</feature>
<dbReference type="EC" id="1.1.1.94" evidence="1"/>
<dbReference type="EMBL" id="AE017263">
    <property type="protein sequence ID" value="AAT75557.1"/>
    <property type="molecule type" value="Genomic_DNA"/>
</dbReference>
<dbReference type="RefSeq" id="WP_011183097.1">
    <property type="nucleotide sequence ID" value="NC_006055.1"/>
</dbReference>
<dbReference type="RefSeq" id="YP_053441.1">
    <property type="nucleotide sequence ID" value="NC_006055.1"/>
</dbReference>
<dbReference type="SMR" id="Q6F1R6"/>
<dbReference type="STRING" id="265311.Mfl200"/>
<dbReference type="PaxDb" id="265311-Mfl200"/>
<dbReference type="EnsemblBacteria" id="AAT75557">
    <property type="protein sequence ID" value="AAT75557"/>
    <property type="gene ID" value="Mfl200"/>
</dbReference>
<dbReference type="GeneID" id="2898285"/>
<dbReference type="KEGG" id="mfl:Mfl200"/>
<dbReference type="PATRIC" id="fig|265311.5.peg.201"/>
<dbReference type="eggNOG" id="COG0240">
    <property type="taxonomic scope" value="Bacteria"/>
</dbReference>
<dbReference type="HOGENOM" id="CLU_033449_0_0_14"/>
<dbReference type="OrthoDB" id="9812273at2"/>
<dbReference type="UniPathway" id="UPA00940"/>
<dbReference type="Proteomes" id="UP000006647">
    <property type="component" value="Chromosome"/>
</dbReference>
<dbReference type="GO" id="GO:0005829">
    <property type="term" value="C:cytosol"/>
    <property type="evidence" value="ECO:0007669"/>
    <property type="project" value="TreeGrafter"/>
</dbReference>
<dbReference type="GO" id="GO:0047952">
    <property type="term" value="F:glycerol-3-phosphate dehydrogenase [NAD(P)+] activity"/>
    <property type="evidence" value="ECO:0007669"/>
    <property type="project" value="UniProtKB-UniRule"/>
</dbReference>
<dbReference type="GO" id="GO:0051287">
    <property type="term" value="F:NAD binding"/>
    <property type="evidence" value="ECO:0007669"/>
    <property type="project" value="InterPro"/>
</dbReference>
<dbReference type="GO" id="GO:0005975">
    <property type="term" value="P:carbohydrate metabolic process"/>
    <property type="evidence" value="ECO:0007669"/>
    <property type="project" value="InterPro"/>
</dbReference>
<dbReference type="GO" id="GO:0046167">
    <property type="term" value="P:glycerol-3-phosphate biosynthetic process"/>
    <property type="evidence" value="ECO:0007669"/>
    <property type="project" value="UniProtKB-UniRule"/>
</dbReference>
<dbReference type="GO" id="GO:0046168">
    <property type="term" value="P:glycerol-3-phosphate catabolic process"/>
    <property type="evidence" value="ECO:0007669"/>
    <property type="project" value="InterPro"/>
</dbReference>
<dbReference type="GO" id="GO:0006650">
    <property type="term" value="P:glycerophospholipid metabolic process"/>
    <property type="evidence" value="ECO:0007669"/>
    <property type="project" value="UniProtKB-UniRule"/>
</dbReference>
<dbReference type="GO" id="GO:0008654">
    <property type="term" value="P:phospholipid biosynthetic process"/>
    <property type="evidence" value="ECO:0007669"/>
    <property type="project" value="UniProtKB-KW"/>
</dbReference>
<dbReference type="Gene3D" id="1.10.1040.10">
    <property type="entry name" value="N-(1-d-carboxylethyl)-l-norvaline Dehydrogenase, domain 2"/>
    <property type="match status" value="1"/>
</dbReference>
<dbReference type="Gene3D" id="3.40.50.720">
    <property type="entry name" value="NAD(P)-binding Rossmann-like Domain"/>
    <property type="match status" value="1"/>
</dbReference>
<dbReference type="HAMAP" id="MF_00394">
    <property type="entry name" value="NAD_Glyc3P_dehydrog"/>
    <property type="match status" value="1"/>
</dbReference>
<dbReference type="InterPro" id="IPR008927">
    <property type="entry name" value="6-PGluconate_DH-like_C_sf"/>
</dbReference>
<dbReference type="InterPro" id="IPR013328">
    <property type="entry name" value="6PGD_dom2"/>
</dbReference>
<dbReference type="InterPro" id="IPR006168">
    <property type="entry name" value="G3P_DH_NAD-dep"/>
</dbReference>
<dbReference type="InterPro" id="IPR006109">
    <property type="entry name" value="G3P_DH_NAD-dep_C"/>
</dbReference>
<dbReference type="InterPro" id="IPR011128">
    <property type="entry name" value="G3P_DH_NAD-dep_N"/>
</dbReference>
<dbReference type="InterPro" id="IPR036291">
    <property type="entry name" value="NAD(P)-bd_dom_sf"/>
</dbReference>
<dbReference type="NCBIfam" id="NF000940">
    <property type="entry name" value="PRK00094.1-2"/>
    <property type="match status" value="1"/>
</dbReference>
<dbReference type="NCBIfam" id="NF000942">
    <property type="entry name" value="PRK00094.1-4"/>
    <property type="match status" value="1"/>
</dbReference>
<dbReference type="PANTHER" id="PTHR11728">
    <property type="entry name" value="GLYCEROL-3-PHOSPHATE DEHYDROGENASE"/>
    <property type="match status" value="1"/>
</dbReference>
<dbReference type="PANTHER" id="PTHR11728:SF1">
    <property type="entry name" value="GLYCEROL-3-PHOSPHATE DEHYDROGENASE [NAD(+)] 2, CHLOROPLASTIC"/>
    <property type="match status" value="1"/>
</dbReference>
<dbReference type="Pfam" id="PF07479">
    <property type="entry name" value="NAD_Gly3P_dh_C"/>
    <property type="match status" value="1"/>
</dbReference>
<dbReference type="Pfam" id="PF01210">
    <property type="entry name" value="NAD_Gly3P_dh_N"/>
    <property type="match status" value="1"/>
</dbReference>
<dbReference type="PIRSF" id="PIRSF000114">
    <property type="entry name" value="Glycerol-3-P_dh"/>
    <property type="match status" value="1"/>
</dbReference>
<dbReference type="PRINTS" id="PR00077">
    <property type="entry name" value="GPDHDRGNASE"/>
</dbReference>
<dbReference type="SUPFAM" id="SSF48179">
    <property type="entry name" value="6-phosphogluconate dehydrogenase C-terminal domain-like"/>
    <property type="match status" value="1"/>
</dbReference>
<dbReference type="SUPFAM" id="SSF51735">
    <property type="entry name" value="NAD(P)-binding Rossmann-fold domains"/>
    <property type="match status" value="1"/>
</dbReference>
<dbReference type="PROSITE" id="PS00957">
    <property type="entry name" value="NAD_G3PDH"/>
    <property type="match status" value="1"/>
</dbReference>
<keyword id="KW-0963">Cytoplasm</keyword>
<keyword id="KW-0444">Lipid biosynthesis</keyword>
<keyword id="KW-0443">Lipid metabolism</keyword>
<keyword id="KW-0520">NAD</keyword>
<keyword id="KW-0521">NADP</keyword>
<keyword id="KW-0547">Nucleotide-binding</keyword>
<keyword id="KW-0560">Oxidoreductase</keyword>
<keyword id="KW-0594">Phospholipid biosynthesis</keyword>
<keyword id="KW-1208">Phospholipid metabolism</keyword>
<keyword id="KW-1185">Reference proteome</keyword>
<reference key="1">
    <citation type="submission" date="2004-06" db="EMBL/GenBank/DDBJ databases">
        <authorList>
            <person name="Birren B.W."/>
            <person name="Stange-Thomann N."/>
            <person name="Hafez N."/>
            <person name="DeCaprio D."/>
            <person name="Fisher S."/>
            <person name="Butler J."/>
            <person name="Elkins T."/>
            <person name="Kodira C.D."/>
            <person name="Major J."/>
            <person name="Wang S."/>
            <person name="Nicol R."/>
            <person name="Nusbaum C."/>
        </authorList>
    </citation>
    <scope>NUCLEOTIDE SEQUENCE [LARGE SCALE GENOMIC DNA]</scope>
    <source>
        <strain>ATCC 33453 / NBRC 100688 / NCTC 11704 / L1</strain>
    </source>
</reference>
<sequence length="334" mass="36773">MSKKNITIIGTGAYGTALANVLADNDNNVIMYGIVEQQVDDINIYHQNSVFFDNKKINKTIRATNSMAAALENTDILILGVPTAAIKHVVNDIIKYAKKPMDIINTAKGLDEENLGLLSDKIKKYFEGSNVISTYSALYGPSIAIEVVDRQPTAIMIASETIEKAKELCNVFSNEYFYMYPTTDIAGCEISAALKNAIAIGGGILKAYNAGDNAHATLLTLGLNEMYEFGKHFGAKLETFLNFAGLGDLILTASSKKSRNFRLGERIVELNDAKKALESFNLTVEGVETARIAHEIGVKYQISMNFFEIIYNILYNNVKPISLLNNVFRDVKLV</sequence>
<organism>
    <name type="scientific">Mesoplasma florum (strain ATCC 33453 / NBRC 100688 / NCTC 11704 / L1)</name>
    <name type="common">Acholeplasma florum</name>
    <dbReference type="NCBI Taxonomy" id="265311"/>
    <lineage>
        <taxon>Bacteria</taxon>
        <taxon>Bacillati</taxon>
        <taxon>Mycoplasmatota</taxon>
        <taxon>Mollicutes</taxon>
        <taxon>Entomoplasmatales</taxon>
        <taxon>Entomoplasmataceae</taxon>
        <taxon>Mesoplasma</taxon>
    </lineage>
</organism>
<evidence type="ECO:0000255" key="1">
    <source>
        <dbReference type="HAMAP-Rule" id="MF_00394"/>
    </source>
</evidence>
<gene>
    <name evidence="1" type="primary">gpsA</name>
    <name type="ordered locus">Mfl200</name>
</gene>